<sequence length="92" mass="9682">MEVKTFAFLQIAVLIALGLHLAPAGSNQLSGPQSSANSNEAVFCDTNCTQGTDEAWSGCRGDCFCVYVGNSTEGRCMMLSGDFDYSTPGAED</sequence>
<name>EV942_IXORI</name>
<comment type="function">
    <text evidence="4">Salivary chemokine-binding protein which binds to host chemokines CXCL1, CXCL2, CXCL3, CXCL4, CXCL5, CXCL6, CXCL10, CXCL11 and CXCL13.</text>
</comment>
<comment type="subcellular location">
    <subcellularLocation>
        <location evidence="6">Secreted</location>
    </subcellularLocation>
</comment>
<accession>A0A0K8R5I2</accession>
<organism evidence="7">
    <name type="scientific">Ixodes ricinus</name>
    <name type="common">Common tick</name>
    <name type="synonym">Acarus ricinus</name>
    <dbReference type="NCBI Taxonomy" id="34613"/>
    <lineage>
        <taxon>Eukaryota</taxon>
        <taxon>Metazoa</taxon>
        <taxon>Ecdysozoa</taxon>
        <taxon>Arthropoda</taxon>
        <taxon>Chelicerata</taxon>
        <taxon>Arachnida</taxon>
        <taxon>Acari</taxon>
        <taxon>Parasitiformes</taxon>
        <taxon>Ixodida</taxon>
        <taxon>Ixodoidea</taxon>
        <taxon>Ixodidae</taxon>
        <taxon>Ixodinae</taxon>
        <taxon>Ixodes</taxon>
    </lineage>
</organism>
<keyword id="KW-1015">Disulfide bond</keyword>
<keyword id="KW-0325">Glycoprotein</keyword>
<keyword id="KW-0964">Secreted</keyword>
<keyword id="KW-0732">Signal</keyword>
<protein>
    <recommendedName>
        <fullName evidence="5">Evasin P942</fullName>
    </recommendedName>
</protein>
<reference evidence="7" key="1">
    <citation type="journal article" date="2013" name="FASEB J.">
        <title>De novo Ixodes ricinus salivary gland transcriptome analysis using two next-generation sequencing methodologies.</title>
        <authorList>
            <person name="Schwarz A."/>
            <person name="von Reumont B.M."/>
            <person name="Erhart J."/>
            <person name="Chagas A.C."/>
            <person name="Ribeiro J.M."/>
            <person name="Kotsyfakis M."/>
        </authorList>
    </citation>
    <scope>NUCLEOTIDE SEQUENCE [LARGE SCALE MRNA]</scope>
    <source>
        <tissue evidence="7">Salivary gland</tissue>
    </source>
</reference>
<reference evidence="6" key="2">
    <citation type="journal article" date="2019" name="J. Biol. Chem.">
        <title>A knottin scaffold directs the CXC-chemokine-binding specificity of tick evasins.</title>
        <authorList>
            <person name="Lee A.W."/>
            <person name="Deruaz M."/>
            <person name="Lynch C."/>
            <person name="Davies G."/>
            <person name="Singh K."/>
            <person name="Alenazi Y."/>
            <person name="Eaton J.R.O."/>
            <person name="Kawamura A."/>
            <person name="Shaw J."/>
            <person name="Proudfoot A.E.I."/>
            <person name="Dias J.M."/>
            <person name="Bhattacharya S."/>
        </authorList>
    </citation>
    <scope>FUNCTION</scope>
</reference>
<dbReference type="EMBL" id="GADI01007492">
    <property type="protein sequence ID" value="JAA66316.1"/>
    <property type="molecule type" value="mRNA"/>
</dbReference>
<dbReference type="SMR" id="A0A0K8R5I2"/>
<dbReference type="GO" id="GO:0005576">
    <property type="term" value="C:extracellular region"/>
    <property type="evidence" value="ECO:0007669"/>
    <property type="project" value="UniProtKB-SubCell"/>
</dbReference>
<dbReference type="GO" id="GO:0019958">
    <property type="term" value="F:C-X-C chemokine binding"/>
    <property type="evidence" value="ECO:0000314"/>
    <property type="project" value="UniProtKB"/>
</dbReference>
<feature type="signal peptide" evidence="2">
    <location>
        <begin position="1"/>
        <end position="26"/>
    </location>
</feature>
<feature type="chain" id="PRO_5005516276" description="Evasin P942" evidence="2">
    <location>
        <begin position="27"/>
        <end position="92"/>
    </location>
</feature>
<feature type="glycosylation site" description="N-linked (GlcNAc...) asparagine" evidence="3">
    <location>
        <position position="47"/>
    </location>
</feature>
<feature type="glycosylation site" description="N-linked (GlcNAc...) asparagine" evidence="3">
    <location>
        <position position="70"/>
    </location>
</feature>
<feature type="disulfide bond" evidence="1">
    <location>
        <begin position="44"/>
        <end position="63"/>
    </location>
</feature>
<feature type="disulfide bond" evidence="1">
    <location>
        <begin position="48"/>
        <end position="65"/>
    </location>
</feature>
<feature type="disulfide bond" evidence="1">
    <location>
        <begin position="59"/>
        <end position="76"/>
    </location>
</feature>
<evidence type="ECO:0000250" key="1">
    <source>
        <dbReference type="UniProtKB" id="P0C8E8"/>
    </source>
</evidence>
<evidence type="ECO:0000255" key="2"/>
<evidence type="ECO:0000255" key="3">
    <source>
        <dbReference type="PROSITE-ProRule" id="PRU00498"/>
    </source>
</evidence>
<evidence type="ECO:0000269" key="4">
    <source>
    </source>
</evidence>
<evidence type="ECO:0000303" key="5">
    <source>
    </source>
</evidence>
<evidence type="ECO:0000305" key="6"/>
<evidence type="ECO:0000312" key="7">
    <source>
        <dbReference type="EMBL" id="JAA66316.1"/>
    </source>
</evidence>
<proteinExistence type="inferred from homology"/>